<organism>
    <name type="scientific">Staphylococcus aureus (strain JH1)</name>
    <dbReference type="NCBI Taxonomy" id="359787"/>
    <lineage>
        <taxon>Bacteria</taxon>
        <taxon>Bacillati</taxon>
        <taxon>Bacillota</taxon>
        <taxon>Bacilli</taxon>
        <taxon>Bacillales</taxon>
        <taxon>Staphylococcaceae</taxon>
        <taxon>Staphylococcus</taxon>
    </lineage>
</organism>
<gene>
    <name evidence="1" type="primary">rnhB</name>
    <name type="ordered locus">SaurJH1_1328</name>
</gene>
<keyword id="KW-0963">Cytoplasm</keyword>
<keyword id="KW-0255">Endonuclease</keyword>
<keyword id="KW-0378">Hydrolase</keyword>
<keyword id="KW-0464">Manganese</keyword>
<keyword id="KW-0479">Metal-binding</keyword>
<keyword id="KW-0540">Nuclease</keyword>
<dbReference type="EC" id="3.1.26.4" evidence="1"/>
<dbReference type="EMBL" id="CP000736">
    <property type="protein sequence ID" value="ABR52181.1"/>
    <property type="molecule type" value="Genomic_DNA"/>
</dbReference>
<dbReference type="SMR" id="A6U163"/>
<dbReference type="KEGG" id="sah:SaurJH1_1328"/>
<dbReference type="HOGENOM" id="CLU_036532_2_1_9"/>
<dbReference type="GO" id="GO:0005737">
    <property type="term" value="C:cytoplasm"/>
    <property type="evidence" value="ECO:0007669"/>
    <property type="project" value="UniProtKB-SubCell"/>
</dbReference>
<dbReference type="GO" id="GO:0032299">
    <property type="term" value="C:ribonuclease H2 complex"/>
    <property type="evidence" value="ECO:0007669"/>
    <property type="project" value="TreeGrafter"/>
</dbReference>
<dbReference type="GO" id="GO:0030145">
    <property type="term" value="F:manganese ion binding"/>
    <property type="evidence" value="ECO:0007669"/>
    <property type="project" value="UniProtKB-UniRule"/>
</dbReference>
<dbReference type="GO" id="GO:0003723">
    <property type="term" value="F:RNA binding"/>
    <property type="evidence" value="ECO:0007669"/>
    <property type="project" value="InterPro"/>
</dbReference>
<dbReference type="GO" id="GO:0004523">
    <property type="term" value="F:RNA-DNA hybrid ribonuclease activity"/>
    <property type="evidence" value="ECO:0007669"/>
    <property type="project" value="UniProtKB-UniRule"/>
</dbReference>
<dbReference type="GO" id="GO:0043137">
    <property type="term" value="P:DNA replication, removal of RNA primer"/>
    <property type="evidence" value="ECO:0007669"/>
    <property type="project" value="TreeGrafter"/>
</dbReference>
<dbReference type="GO" id="GO:0006298">
    <property type="term" value="P:mismatch repair"/>
    <property type="evidence" value="ECO:0007669"/>
    <property type="project" value="TreeGrafter"/>
</dbReference>
<dbReference type="CDD" id="cd07182">
    <property type="entry name" value="RNase_HII_bacteria_HII_like"/>
    <property type="match status" value="1"/>
</dbReference>
<dbReference type="FunFam" id="3.30.420.10:FF:000006">
    <property type="entry name" value="Ribonuclease HII"/>
    <property type="match status" value="1"/>
</dbReference>
<dbReference type="Gene3D" id="3.30.420.10">
    <property type="entry name" value="Ribonuclease H-like superfamily/Ribonuclease H"/>
    <property type="match status" value="1"/>
</dbReference>
<dbReference type="HAMAP" id="MF_00052_B">
    <property type="entry name" value="RNase_HII_B"/>
    <property type="match status" value="1"/>
</dbReference>
<dbReference type="InterPro" id="IPR022898">
    <property type="entry name" value="RNase_HII"/>
</dbReference>
<dbReference type="InterPro" id="IPR001352">
    <property type="entry name" value="RNase_HII/HIII"/>
</dbReference>
<dbReference type="InterPro" id="IPR024567">
    <property type="entry name" value="RNase_HII/HIII_dom"/>
</dbReference>
<dbReference type="InterPro" id="IPR012337">
    <property type="entry name" value="RNaseH-like_sf"/>
</dbReference>
<dbReference type="InterPro" id="IPR036397">
    <property type="entry name" value="RNaseH_sf"/>
</dbReference>
<dbReference type="NCBIfam" id="NF000594">
    <property type="entry name" value="PRK00015.1-1"/>
    <property type="match status" value="1"/>
</dbReference>
<dbReference type="NCBIfam" id="NF000595">
    <property type="entry name" value="PRK00015.1-3"/>
    <property type="match status" value="1"/>
</dbReference>
<dbReference type="PANTHER" id="PTHR10954">
    <property type="entry name" value="RIBONUCLEASE H2 SUBUNIT A"/>
    <property type="match status" value="1"/>
</dbReference>
<dbReference type="PANTHER" id="PTHR10954:SF18">
    <property type="entry name" value="RIBONUCLEASE HII"/>
    <property type="match status" value="1"/>
</dbReference>
<dbReference type="Pfam" id="PF01351">
    <property type="entry name" value="RNase_HII"/>
    <property type="match status" value="1"/>
</dbReference>
<dbReference type="SUPFAM" id="SSF53098">
    <property type="entry name" value="Ribonuclease H-like"/>
    <property type="match status" value="1"/>
</dbReference>
<dbReference type="PROSITE" id="PS51975">
    <property type="entry name" value="RNASE_H_2"/>
    <property type="match status" value="1"/>
</dbReference>
<sequence length="255" mass="28527">MTLTIKEVTQLINAVNTIEELENHECFLDERKGVQNAIARRRKALEKEQALKEKYVEMTYFENEILKEHPNAIICGIDEVGRGPLAGPVVACATILNSNHNYLGLDDSKKVPITKRLELNEALKNEVTAFAYGIATAEEIDEFNIYKATQIAMQRAIDGLSVQPTHLLIDAMTLDNALPQVSLIKGDARSVSIAAASIMAKVFRDDYMTQLSKDYPEYGFEKNAGYGTKQHLLAIDDIGIMKEHRKSFEPIKSLL</sequence>
<accession>A6U163</accession>
<reference key="1">
    <citation type="submission" date="2007-06" db="EMBL/GenBank/DDBJ databases">
        <title>Complete sequence of chromosome of Staphylococcus aureus subsp. aureus JH1.</title>
        <authorList>
            <consortium name="US DOE Joint Genome Institute"/>
            <person name="Copeland A."/>
            <person name="Lucas S."/>
            <person name="Lapidus A."/>
            <person name="Barry K."/>
            <person name="Detter J.C."/>
            <person name="Glavina del Rio T."/>
            <person name="Hammon N."/>
            <person name="Israni S."/>
            <person name="Dalin E."/>
            <person name="Tice H."/>
            <person name="Pitluck S."/>
            <person name="Chain P."/>
            <person name="Malfatti S."/>
            <person name="Shin M."/>
            <person name="Vergez L."/>
            <person name="Schmutz J."/>
            <person name="Larimer F."/>
            <person name="Land M."/>
            <person name="Hauser L."/>
            <person name="Kyrpides N."/>
            <person name="Ivanova N."/>
            <person name="Tomasz A."/>
            <person name="Richardson P."/>
        </authorList>
    </citation>
    <scope>NUCLEOTIDE SEQUENCE [LARGE SCALE GENOMIC DNA]</scope>
    <source>
        <strain>JH1</strain>
    </source>
</reference>
<protein>
    <recommendedName>
        <fullName evidence="1">Ribonuclease HII</fullName>
        <shortName evidence="1">RNase HII</shortName>
        <ecNumber evidence="1">3.1.26.4</ecNumber>
    </recommendedName>
</protein>
<comment type="function">
    <text evidence="1">Endonuclease that specifically degrades the RNA of RNA-DNA hybrids.</text>
</comment>
<comment type="catalytic activity">
    <reaction evidence="1">
        <text>Endonucleolytic cleavage to 5'-phosphomonoester.</text>
        <dbReference type="EC" id="3.1.26.4"/>
    </reaction>
</comment>
<comment type="cofactor">
    <cofactor evidence="1">
        <name>Mn(2+)</name>
        <dbReference type="ChEBI" id="CHEBI:29035"/>
    </cofactor>
    <cofactor evidence="1">
        <name>Mg(2+)</name>
        <dbReference type="ChEBI" id="CHEBI:18420"/>
    </cofactor>
    <text evidence="1">Manganese or magnesium. Binds 1 divalent metal ion per monomer in the absence of substrate. May bind a second metal ion after substrate binding.</text>
</comment>
<comment type="subcellular location">
    <subcellularLocation>
        <location evidence="1">Cytoplasm</location>
    </subcellularLocation>
</comment>
<comment type="similarity">
    <text evidence="1">Belongs to the RNase HII family.</text>
</comment>
<proteinExistence type="inferred from homology"/>
<evidence type="ECO:0000255" key="1">
    <source>
        <dbReference type="HAMAP-Rule" id="MF_00052"/>
    </source>
</evidence>
<evidence type="ECO:0000255" key="2">
    <source>
        <dbReference type="PROSITE-ProRule" id="PRU01319"/>
    </source>
</evidence>
<name>RNH2_STAA2</name>
<feature type="chain" id="PRO_1000074937" description="Ribonuclease HII">
    <location>
        <begin position="1"/>
        <end position="255"/>
    </location>
</feature>
<feature type="domain" description="RNase H type-2" evidence="2">
    <location>
        <begin position="72"/>
        <end position="255"/>
    </location>
</feature>
<feature type="binding site" evidence="1">
    <location>
        <position position="78"/>
    </location>
    <ligand>
        <name>a divalent metal cation</name>
        <dbReference type="ChEBI" id="CHEBI:60240"/>
    </ligand>
</feature>
<feature type="binding site" evidence="1">
    <location>
        <position position="79"/>
    </location>
    <ligand>
        <name>a divalent metal cation</name>
        <dbReference type="ChEBI" id="CHEBI:60240"/>
    </ligand>
</feature>
<feature type="binding site" evidence="1">
    <location>
        <position position="170"/>
    </location>
    <ligand>
        <name>a divalent metal cation</name>
        <dbReference type="ChEBI" id="CHEBI:60240"/>
    </ligand>
</feature>